<comment type="catalytic activity">
    <reaction>
        <text>Hydrolysis of terminal, non-reducing alpha-D-mannose residues in alpha-D-mannosides.</text>
        <dbReference type="EC" id="3.2.1.24"/>
    </reaction>
</comment>
<comment type="cofactor">
    <cofactor evidence="1">
        <name>Zn(2+)</name>
        <dbReference type="ChEBI" id="CHEBI:29105"/>
    </cofactor>
    <text evidence="1">Binds 1 zinc ion per subunit.</text>
</comment>
<comment type="subcellular location">
    <subcellularLocation>
        <location evidence="3">Secreted</location>
    </subcellularLocation>
</comment>
<comment type="similarity">
    <text evidence="3">Belongs to the glycosyl hydrolase 38 family.</text>
</comment>
<protein>
    <recommendedName>
        <fullName>Alpha-mannosidase C</fullName>
        <ecNumber>3.2.1.24</ecNumber>
    </recommendedName>
</protein>
<organism>
    <name type="scientific">Dictyostelium discoideum</name>
    <name type="common">Social amoeba</name>
    <dbReference type="NCBI Taxonomy" id="44689"/>
    <lineage>
        <taxon>Eukaryota</taxon>
        <taxon>Amoebozoa</taxon>
        <taxon>Evosea</taxon>
        <taxon>Eumycetozoa</taxon>
        <taxon>Dictyostelia</taxon>
        <taxon>Dictyosteliales</taxon>
        <taxon>Dictyosteliaceae</taxon>
        <taxon>Dictyostelium</taxon>
    </lineage>
</organism>
<dbReference type="EC" id="3.2.1.24"/>
<dbReference type="EMBL" id="AAFI02000004">
    <property type="protein sequence ID" value="EAL73086.1"/>
    <property type="molecule type" value="Genomic_DNA"/>
</dbReference>
<dbReference type="RefSeq" id="XP_646960.1">
    <property type="nucleotide sequence ID" value="XM_641868.1"/>
</dbReference>
<dbReference type="SMR" id="Q55ER0"/>
<dbReference type="FunCoup" id="Q55ER0">
    <property type="interactions" value="10"/>
</dbReference>
<dbReference type="STRING" id="44689.Q55ER0"/>
<dbReference type="GlyCosmos" id="Q55ER0">
    <property type="glycosylation" value="16 sites, No reported glycans"/>
</dbReference>
<dbReference type="GlyGen" id="Q55ER0">
    <property type="glycosylation" value="16 sites"/>
</dbReference>
<dbReference type="PaxDb" id="44689-DDB0231613"/>
<dbReference type="EnsemblProtists" id="EAL73086">
    <property type="protein sequence ID" value="EAL73086"/>
    <property type="gene ID" value="DDB_G0268994"/>
</dbReference>
<dbReference type="GeneID" id="8616650"/>
<dbReference type="KEGG" id="ddi:DDB_G0268994"/>
<dbReference type="dictyBase" id="DDB_G0268994">
    <property type="gene designation" value="manC"/>
</dbReference>
<dbReference type="VEuPathDB" id="AmoebaDB:DDB_G0268994"/>
<dbReference type="eggNOG" id="KOG1959">
    <property type="taxonomic scope" value="Eukaryota"/>
</dbReference>
<dbReference type="HOGENOM" id="CLU_268576_0_0_1"/>
<dbReference type="InParanoid" id="Q55ER0"/>
<dbReference type="OMA" id="CLKYDFR"/>
<dbReference type="PhylomeDB" id="Q55ER0"/>
<dbReference type="Reactome" id="R-DDI-8853383">
    <property type="pathway name" value="Lysosomal oligosaccharide catabolism"/>
</dbReference>
<dbReference type="PRO" id="PR:Q55ER0"/>
<dbReference type="Proteomes" id="UP000002195">
    <property type="component" value="Chromosome 1"/>
</dbReference>
<dbReference type="GO" id="GO:0005576">
    <property type="term" value="C:extracellular region"/>
    <property type="evidence" value="ECO:0007669"/>
    <property type="project" value="UniProtKB-SubCell"/>
</dbReference>
<dbReference type="GO" id="GO:0005764">
    <property type="term" value="C:lysosome"/>
    <property type="evidence" value="ECO:0000318"/>
    <property type="project" value="GO_Central"/>
</dbReference>
<dbReference type="GO" id="GO:0004559">
    <property type="term" value="F:alpha-mannosidase activity"/>
    <property type="evidence" value="ECO:0000318"/>
    <property type="project" value="GO_Central"/>
</dbReference>
<dbReference type="GO" id="GO:0030246">
    <property type="term" value="F:carbohydrate binding"/>
    <property type="evidence" value="ECO:0007669"/>
    <property type="project" value="InterPro"/>
</dbReference>
<dbReference type="GO" id="GO:0046872">
    <property type="term" value="F:metal ion binding"/>
    <property type="evidence" value="ECO:0007669"/>
    <property type="project" value="UniProtKB-KW"/>
</dbReference>
<dbReference type="GO" id="GO:0006013">
    <property type="term" value="P:mannose metabolic process"/>
    <property type="evidence" value="ECO:0007669"/>
    <property type="project" value="InterPro"/>
</dbReference>
<dbReference type="CDD" id="cd00451">
    <property type="entry name" value="GH38N_AMII_euk"/>
    <property type="match status" value="1"/>
</dbReference>
<dbReference type="FunFam" id="1.20.1270.50:FF:000001">
    <property type="entry name" value="Alpha-mannosidase"/>
    <property type="match status" value="1"/>
</dbReference>
<dbReference type="FunFam" id="2.70.98.30:FF:000014">
    <property type="entry name" value="Alpha-mannosidase"/>
    <property type="match status" value="1"/>
</dbReference>
<dbReference type="FunFam" id="3.20.110.10:FF:000012">
    <property type="entry name" value="Alpha-mannosidase B"/>
    <property type="match status" value="1"/>
</dbReference>
<dbReference type="FunFam" id="2.60.40.1360:FF:000013">
    <property type="entry name" value="Alpha-mannosidase C"/>
    <property type="match status" value="1"/>
</dbReference>
<dbReference type="Gene3D" id="2.60.40.1360">
    <property type="match status" value="1"/>
</dbReference>
<dbReference type="Gene3D" id="3.20.110.10">
    <property type="entry name" value="Glycoside hydrolase 38, N terminal domain"/>
    <property type="match status" value="1"/>
</dbReference>
<dbReference type="Gene3D" id="1.20.1270.50">
    <property type="entry name" value="Glycoside hydrolase family 38, central domain"/>
    <property type="match status" value="1"/>
</dbReference>
<dbReference type="Gene3D" id="2.60.40.1180">
    <property type="entry name" value="Golgi alpha-mannosidase II"/>
    <property type="match status" value="1"/>
</dbReference>
<dbReference type="Gene3D" id="2.70.98.30">
    <property type="entry name" value="Golgi alpha-mannosidase II, domain 4"/>
    <property type="match status" value="1"/>
</dbReference>
<dbReference type="InterPro" id="IPR011013">
    <property type="entry name" value="Gal_mutarotase_sf_dom"/>
</dbReference>
<dbReference type="InterPro" id="IPR011330">
    <property type="entry name" value="Glyco_hydro/deAcase_b/a-brl"/>
</dbReference>
<dbReference type="InterPro" id="IPR011682">
    <property type="entry name" value="Glyco_hydro_38_C"/>
</dbReference>
<dbReference type="InterPro" id="IPR015341">
    <property type="entry name" value="Glyco_hydro_38_cen"/>
</dbReference>
<dbReference type="InterPro" id="IPR037094">
    <property type="entry name" value="Glyco_hydro_38_cen_sf"/>
</dbReference>
<dbReference type="InterPro" id="IPR000602">
    <property type="entry name" value="Glyco_hydro_38_N"/>
</dbReference>
<dbReference type="InterPro" id="IPR027291">
    <property type="entry name" value="Glyco_hydro_38_N_sf"/>
</dbReference>
<dbReference type="InterPro" id="IPR028995">
    <property type="entry name" value="Glyco_hydro_57/38_cen_sf"/>
</dbReference>
<dbReference type="InterPro" id="IPR013780">
    <property type="entry name" value="Glyco_hydro_b"/>
</dbReference>
<dbReference type="InterPro" id="IPR050843">
    <property type="entry name" value="Glycosyl_Hydrlase_38"/>
</dbReference>
<dbReference type="PANTHER" id="PTHR11607">
    <property type="entry name" value="ALPHA-MANNOSIDASE"/>
    <property type="match status" value="1"/>
</dbReference>
<dbReference type="PANTHER" id="PTHR11607:SF25">
    <property type="entry name" value="ALPHA-MANNOSIDASE C"/>
    <property type="match status" value="1"/>
</dbReference>
<dbReference type="Pfam" id="PF09261">
    <property type="entry name" value="Alpha-mann_mid"/>
    <property type="match status" value="1"/>
</dbReference>
<dbReference type="Pfam" id="PF07748">
    <property type="entry name" value="Glyco_hydro_38C"/>
    <property type="match status" value="1"/>
</dbReference>
<dbReference type="Pfam" id="PF01074">
    <property type="entry name" value="Glyco_hydro_38N"/>
    <property type="match status" value="1"/>
</dbReference>
<dbReference type="SMART" id="SM00872">
    <property type="entry name" value="Alpha-mann_mid"/>
    <property type="match status" value="1"/>
</dbReference>
<dbReference type="SUPFAM" id="SSF88688">
    <property type="entry name" value="Families 57/38 glycoside transferase middle domain"/>
    <property type="match status" value="1"/>
</dbReference>
<dbReference type="SUPFAM" id="SSF74650">
    <property type="entry name" value="Galactose mutarotase-like"/>
    <property type="match status" value="1"/>
</dbReference>
<dbReference type="SUPFAM" id="SSF88713">
    <property type="entry name" value="Glycoside hydrolase/deacetylase"/>
    <property type="match status" value="1"/>
</dbReference>
<sequence length="1079" mass="124433">MFYKTFGFLFIYLIILISGTLSQKEIDSSNEQPVIEVFLVPHSHCDVGWLKTVEQYYTENVTLILNNVIETLTKDKSKKFNWAEIIYFERWWNDQNETLQNQVKQLISNKQFYFVGGGWTQNDEAITDYQAVINQMTLGHQFLFNQFGIKPEIGWQIDPFGPSTLTPTLFKLMGFKYHVINRIDERIKYIFNATEMNIPESGIMTIEREFEFLWYPSSNNPNISIFTHVLDHHYESPSLTIVDYEIPNLTYTSGFDFEGNPKINPPITILNLRFRADLLVKIIKERIDLFRHNNLLLPFGGDFRFQDSKIEFNNMDKLIKFINSNQKTYGVNIKYSTVDEYFEKVIQDTNINWKEDTTTTTTTTIPIGGDEFPKLSNLDYFDYTKCDYNDYQKYKTCSLYYSGFFSSYSELKQISRQSDSLLRIGEFLYSFANLISNNNNNDDDDDDDNDFNIQLKEISNILVQHRNVSGILTHHDAITGTAKTKVRDDYLLMLNQVQSNTMNNVIPNIVGYLLSNKSIQNFDYSCNNTIIMNSPQIGDIFSISFTNSLGWDRSEYIQIQLPPSTIVTVYNYNLISIQSQIVQRFDKDNQTFLYFNVETPSLGISTYFIIITSTNDDNVDDDVDKVFGDDELLIYLLKNGILSKPILSEISEISELSSSSSSSSSSSSSQITIGNSKFNLNFNYLNENYNLLTLTSFDDLIENEYSIPITQNYIEYISGNDNSYIFKPSGLPVNLKPESPKFYKVTGSLVQMITILYTNNCSQTYIVYNSTTTTTTTTTTTTTTNNDDSPPLELINDEQYFEIDNIVAAGWNKEIGSQFSSESINNDKTFYTSNGLELIERNYKSLFNDTTEFNMIAGNYYPVINTIQILDNKSKKQLTILTKQSFGASSQNNGELNLLFIRRSTDQFVTLNETMNDISNPLIKIKVLFGNSNSIENIRTPHSLLLENPLLPIYSIVSDITIDKWISIYNTVFKPFKTSLPYNLHLLTFTKQQQQQQQDFNEDNPLDYFIRFLNIYEISQSESFSQPIEFKLTNYFNNFNITNIRESSLTFNSIINNNTNSIILNPLNLISLIITISKN</sequence>
<proteinExistence type="inferred from homology"/>
<name>MANC_DICDI</name>
<accession>Q55ER0</accession>
<evidence type="ECO:0000250" key="1"/>
<evidence type="ECO:0000255" key="2"/>
<evidence type="ECO:0000305" key="3"/>
<reference key="1">
    <citation type="journal article" date="2005" name="Nature">
        <title>The genome of the social amoeba Dictyostelium discoideum.</title>
        <authorList>
            <person name="Eichinger L."/>
            <person name="Pachebat J.A."/>
            <person name="Gloeckner G."/>
            <person name="Rajandream M.A."/>
            <person name="Sucgang R."/>
            <person name="Berriman M."/>
            <person name="Song J."/>
            <person name="Olsen R."/>
            <person name="Szafranski K."/>
            <person name="Xu Q."/>
            <person name="Tunggal B."/>
            <person name="Kummerfeld S."/>
            <person name="Madera M."/>
            <person name="Konfortov B.A."/>
            <person name="Rivero F."/>
            <person name="Bankier A.T."/>
            <person name="Lehmann R."/>
            <person name="Hamlin N."/>
            <person name="Davies R."/>
            <person name="Gaudet P."/>
            <person name="Fey P."/>
            <person name="Pilcher K."/>
            <person name="Chen G."/>
            <person name="Saunders D."/>
            <person name="Sodergren E.J."/>
            <person name="Davis P."/>
            <person name="Kerhornou A."/>
            <person name="Nie X."/>
            <person name="Hall N."/>
            <person name="Anjard C."/>
            <person name="Hemphill L."/>
            <person name="Bason N."/>
            <person name="Farbrother P."/>
            <person name="Desany B."/>
            <person name="Just E."/>
            <person name="Morio T."/>
            <person name="Rost R."/>
            <person name="Churcher C.M."/>
            <person name="Cooper J."/>
            <person name="Haydock S."/>
            <person name="van Driessche N."/>
            <person name="Cronin A."/>
            <person name="Goodhead I."/>
            <person name="Muzny D.M."/>
            <person name="Mourier T."/>
            <person name="Pain A."/>
            <person name="Lu M."/>
            <person name="Harper D."/>
            <person name="Lindsay R."/>
            <person name="Hauser H."/>
            <person name="James K.D."/>
            <person name="Quiles M."/>
            <person name="Madan Babu M."/>
            <person name="Saito T."/>
            <person name="Buchrieser C."/>
            <person name="Wardroper A."/>
            <person name="Felder M."/>
            <person name="Thangavelu M."/>
            <person name="Johnson D."/>
            <person name="Knights A."/>
            <person name="Loulseged H."/>
            <person name="Mungall K.L."/>
            <person name="Oliver K."/>
            <person name="Price C."/>
            <person name="Quail M.A."/>
            <person name="Urushihara H."/>
            <person name="Hernandez J."/>
            <person name="Rabbinowitsch E."/>
            <person name="Steffen D."/>
            <person name="Sanders M."/>
            <person name="Ma J."/>
            <person name="Kohara Y."/>
            <person name="Sharp S."/>
            <person name="Simmonds M.N."/>
            <person name="Spiegler S."/>
            <person name="Tivey A."/>
            <person name="Sugano S."/>
            <person name="White B."/>
            <person name="Walker D."/>
            <person name="Woodward J.R."/>
            <person name="Winckler T."/>
            <person name="Tanaka Y."/>
            <person name="Shaulsky G."/>
            <person name="Schleicher M."/>
            <person name="Weinstock G.M."/>
            <person name="Rosenthal A."/>
            <person name="Cox E.C."/>
            <person name="Chisholm R.L."/>
            <person name="Gibbs R.A."/>
            <person name="Loomis W.F."/>
            <person name="Platzer M."/>
            <person name="Kay R.R."/>
            <person name="Williams J.G."/>
            <person name="Dear P.H."/>
            <person name="Noegel A.A."/>
            <person name="Barrell B.G."/>
            <person name="Kuspa A."/>
        </authorList>
    </citation>
    <scope>NUCLEOTIDE SEQUENCE [LARGE SCALE GENOMIC DNA]</scope>
    <source>
        <strain>AX4</strain>
    </source>
</reference>
<keyword id="KW-0325">Glycoprotein</keyword>
<keyword id="KW-0326">Glycosidase</keyword>
<keyword id="KW-0378">Hydrolase</keyword>
<keyword id="KW-0479">Metal-binding</keyword>
<keyword id="KW-1185">Reference proteome</keyword>
<keyword id="KW-0964">Secreted</keyword>
<keyword id="KW-0732">Signal</keyword>
<keyword id="KW-0862">Zinc</keyword>
<feature type="signal peptide" evidence="2">
    <location>
        <begin position="1"/>
        <end position="22"/>
    </location>
</feature>
<feature type="chain" id="PRO_0000327842" description="Alpha-mannosidase C">
    <location>
        <begin position="23"/>
        <end position="1079"/>
    </location>
</feature>
<feature type="active site" description="Nucleophile" evidence="1">
    <location>
        <position position="158"/>
    </location>
</feature>
<feature type="binding site" evidence="1">
    <location>
        <position position="44"/>
    </location>
    <ligand>
        <name>Zn(2+)</name>
        <dbReference type="ChEBI" id="CHEBI:29105"/>
    </ligand>
</feature>
<feature type="binding site" evidence="1">
    <location>
        <position position="46"/>
    </location>
    <ligand>
        <name>Zn(2+)</name>
        <dbReference type="ChEBI" id="CHEBI:29105"/>
    </ligand>
</feature>
<feature type="binding site" evidence="1">
    <location>
        <position position="158"/>
    </location>
    <ligand>
        <name>Zn(2+)</name>
        <dbReference type="ChEBI" id="CHEBI:29105"/>
    </ligand>
</feature>
<feature type="binding site" evidence="1">
    <location>
        <position position="475"/>
    </location>
    <ligand>
        <name>Zn(2+)</name>
        <dbReference type="ChEBI" id="CHEBI:29105"/>
    </ligand>
</feature>
<feature type="glycosylation site" description="N-linked (GlcNAc...) asparagine" evidence="2">
    <location>
        <position position="60"/>
    </location>
</feature>
<feature type="glycosylation site" description="N-linked (GlcNAc...) asparagine" evidence="2">
    <location>
        <position position="96"/>
    </location>
</feature>
<feature type="glycosylation site" description="N-linked (GlcNAc...) asparagine" evidence="2">
    <location>
        <position position="192"/>
    </location>
</feature>
<feature type="glycosylation site" description="N-linked (GlcNAc...) asparagine" evidence="2">
    <location>
        <position position="222"/>
    </location>
</feature>
<feature type="glycosylation site" description="N-linked (GlcNAc...) asparagine" evidence="2">
    <location>
        <position position="248"/>
    </location>
</feature>
<feature type="glycosylation site" description="N-linked (GlcNAc...) asparagine" evidence="2">
    <location>
        <position position="467"/>
    </location>
</feature>
<feature type="glycosylation site" description="N-linked (GlcNAc...) asparagine" evidence="2">
    <location>
        <position position="516"/>
    </location>
</feature>
<feature type="glycosylation site" description="N-linked (GlcNAc...) asparagine" evidence="2">
    <location>
        <position position="527"/>
    </location>
</feature>
<feature type="glycosylation site" description="N-linked (GlcNAc...) asparagine" evidence="2">
    <location>
        <position position="589"/>
    </location>
</feature>
<feature type="glycosylation site" description="N-linked (GlcNAc...) asparagine" evidence="2">
    <location>
        <position position="760"/>
    </location>
</feature>
<feature type="glycosylation site" description="N-linked (GlcNAc...) asparagine" evidence="2">
    <location>
        <position position="769"/>
    </location>
</feature>
<feature type="glycosylation site" description="N-linked (GlcNAc...) asparagine" evidence="2">
    <location>
        <position position="848"/>
    </location>
</feature>
<feature type="glycosylation site" description="N-linked (GlcNAc...) asparagine" evidence="2">
    <location>
        <position position="872"/>
    </location>
</feature>
<feature type="glycosylation site" description="N-linked (GlcNAc...) asparagine" evidence="2">
    <location>
        <position position="912"/>
    </location>
</feature>
<feature type="glycosylation site" description="N-linked (GlcNAc...) asparagine" evidence="2">
    <location>
        <position position="1040"/>
    </location>
</feature>
<feature type="glycosylation site" description="N-linked (GlcNAc...) asparagine" evidence="2">
    <location>
        <position position="1057"/>
    </location>
</feature>
<gene>
    <name type="primary">manC</name>
    <name type="ORF">DDB_G0268994</name>
</gene>